<sequence>MTDEKLNDHTVKAPEYLPDILTVESLDMEAQGIAHRADGKVVFIEGALPFERVTANVYRKKSSFEKAVVMAIHRESSQRVRPACPHFGLHTGACGGCKMQHLHVGAQVAVKQRVLEDNLWHIGKVKADNLLRPIEGPAWGYRYRARLSVRYVRKKNAVLVGFHERKSSYVADMTECHVVPRHVSDMLVPLRELIAGMDARETLPQIELACGDTVTAMVLRHMEPLSSGDLARLRAFAVSHPGLQWWLQPGGLDSVKLLDEGVPELSYDLPEFGITMPFKPTDFTQVNPHINQVLVSRALRLLAVQPHERVIDWFCGLGNFTLPLATCAREVLGIEGSEALVARSCQNFKKNQPASQSRSALSATEFVARNLFEMTPAMLVKDGMADKWLVDPPREGAFELFKSLAALHQQMVTGVPCDDGEQQQSLVLGDWTPPQRIVYVSCNPATLARDAGVLVESGAYRCTLAGVVNMFPHTAHVESIAVFERG</sequence>
<reference key="1">
    <citation type="journal article" date="2008" name="Appl. Environ. Microbiol.">
        <title>The genome of Polaromonas sp. strain JS666: insights into the evolution of a hydrocarbon- and xenobiotic-degrading bacterium, and features of relevance to biotechnology.</title>
        <authorList>
            <person name="Mattes T.E."/>
            <person name="Alexander A.K."/>
            <person name="Richardson P.M."/>
            <person name="Munk A.C."/>
            <person name="Han C.S."/>
            <person name="Stothard P."/>
            <person name="Coleman N.V."/>
        </authorList>
    </citation>
    <scope>NUCLEOTIDE SEQUENCE [LARGE SCALE GENOMIC DNA]</scope>
    <source>
        <strain>JS666 / ATCC BAA-500</strain>
    </source>
</reference>
<comment type="function">
    <text evidence="1">Catalyzes the formation of 5-methyl-uridine at position 1939 (m5U1939) in 23S rRNA.</text>
</comment>
<comment type="catalytic activity">
    <reaction evidence="1">
        <text>uridine(1939) in 23S rRNA + S-adenosyl-L-methionine = 5-methyluridine(1939) in 23S rRNA + S-adenosyl-L-homocysteine + H(+)</text>
        <dbReference type="Rhea" id="RHEA:42908"/>
        <dbReference type="Rhea" id="RHEA-COMP:10278"/>
        <dbReference type="Rhea" id="RHEA-COMP:10279"/>
        <dbReference type="ChEBI" id="CHEBI:15378"/>
        <dbReference type="ChEBI" id="CHEBI:57856"/>
        <dbReference type="ChEBI" id="CHEBI:59789"/>
        <dbReference type="ChEBI" id="CHEBI:65315"/>
        <dbReference type="ChEBI" id="CHEBI:74447"/>
        <dbReference type="EC" id="2.1.1.190"/>
    </reaction>
</comment>
<comment type="similarity">
    <text evidence="1">Belongs to the class I-like SAM-binding methyltransferase superfamily. RNA M5U methyltransferase family. RlmD subfamily.</text>
</comment>
<protein>
    <recommendedName>
        <fullName evidence="1">23S rRNA (uracil(1939)-C(5))-methyltransferase RlmD</fullName>
        <ecNumber evidence="1">2.1.1.190</ecNumber>
    </recommendedName>
    <alternativeName>
        <fullName evidence="1">23S rRNA(m5U1939)-methyltransferase</fullName>
    </alternativeName>
</protein>
<proteinExistence type="inferred from homology"/>
<gene>
    <name evidence="1" type="primary">rlmD</name>
    <name type="synonym">rumA</name>
    <name type="ordered locus">Bpro_3057</name>
</gene>
<keyword id="KW-0004">4Fe-4S</keyword>
<keyword id="KW-0408">Iron</keyword>
<keyword id="KW-0411">Iron-sulfur</keyword>
<keyword id="KW-0479">Metal-binding</keyword>
<keyword id="KW-0489">Methyltransferase</keyword>
<keyword id="KW-1185">Reference proteome</keyword>
<keyword id="KW-0698">rRNA processing</keyword>
<keyword id="KW-0949">S-adenosyl-L-methionine</keyword>
<keyword id="KW-0808">Transferase</keyword>
<name>RLMD_POLSJ</name>
<accession>Q128S1</accession>
<evidence type="ECO:0000255" key="1">
    <source>
        <dbReference type="HAMAP-Rule" id="MF_01010"/>
    </source>
</evidence>
<dbReference type="EC" id="2.1.1.190" evidence="1"/>
<dbReference type="EMBL" id="CP000316">
    <property type="protein sequence ID" value="ABE44971.1"/>
    <property type="molecule type" value="Genomic_DNA"/>
</dbReference>
<dbReference type="RefSeq" id="WP_011483968.1">
    <property type="nucleotide sequence ID" value="NC_007948.1"/>
</dbReference>
<dbReference type="SMR" id="Q128S1"/>
<dbReference type="STRING" id="296591.Bpro_3057"/>
<dbReference type="KEGG" id="pol:Bpro_3057"/>
<dbReference type="eggNOG" id="COG2265">
    <property type="taxonomic scope" value="Bacteria"/>
</dbReference>
<dbReference type="HOGENOM" id="CLU_014689_8_2_4"/>
<dbReference type="OrthoDB" id="9804590at2"/>
<dbReference type="Proteomes" id="UP000001983">
    <property type="component" value="Chromosome"/>
</dbReference>
<dbReference type="GO" id="GO:0051539">
    <property type="term" value="F:4 iron, 4 sulfur cluster binding"/>
    <property type="evidence" value="ECO:0007669"/>
    <property type="project" value="UniProtKB-KW"/>
</dbReference>
<dbReference type="GO" id="GO:0005506">
    <property type="term" value="F:iron ion binding"/>
    <property type="evidence" value="ECO:0007669"/>
    <property type="project" value="UniProtKB-UniRule"/>
</dbReference>
<dbReference type="GO" id="GO:0003723">
    <property type="term" value="F:RNA binding"/>
    <property type="evidence" value="ECO:0007669"/>
    <property type="project" value="InterPro"/>
</dbReference>
<dbReference type="GO" id="GO:0070041">
    <property type="term" value="F:rRNA (uridine-C5-)-methyltransferase activity"/>
    <property type="evidence" value="ECO:0007669"/>
    <property type="project" value="UniProtKB-UniRule"/>
</dbReference>
<dbReference type="GO" id="GO:0070475">
    <property type="term" value="P:rRNA base methylation"/>
    <property type="evidence" value="ECO:0007669"/>
    <property type="project" value="TreeGrafter"/>
</dbReference>
<dbReference type="Gene3D" id="2.40.50.1070">
    <property type="match status" value="1"/>
</dbReference>
<dbReference type="Gene3D" id="2.40.50.140">
    <property type="entry name" value="Nucleic acid-binding proteins"/>
    <property type="match status" value="1"/>
</dbReference>
<dbReference type="Gene3D" id="3.40.50.150">
    <property type="entry name" value="Vaccinia Virus protein VP39"/>
    <property type="match status" value="1"/>
</dbReference>
<dbReference type="HAMAP" id="MF_01010">
    <property type="entry name" value="23SrRNA_methyltr_RlmD"/>
    <property type="match status" value="1"/>
</dbReference>
<dbReference type="InterPro" id="IPR001566">
    <property type="entry name" value="23S_rRNA_MeTrfase_RlmD"/>
</dbReference>
<dbReference type="InterPro" id="IPR030391">
    <property type="entry name" value="MeTrfase_TrmA_CS"/>
</dbReference>
<dbReference type="InterPro" id="IPR012340">
    <property type="entry name" value="NA-bd_OB-fold"/>
</dbReference>
<dbReference type="InterPro" id="IPR029063">
    <property type="entry name" value="SAM-dependent_MTases_sf"/>
</dbReference>
<dbReference type="InterPro" id="IPR010280">
    <property type="entry name" value="U5_MeTrfase_fam"/>
</dbReference>
<dbReference type="NCBIfam" id="NF009639">
    <property type="entry name" value="PRK13168.1"/>
    <property type="match status" value="1"/>
</dbReference>
<dbReference type="PANTHER" id="PTHR11061:SF49">
    <property type="entry name" value="23S RRNA (URACIL(1939)-C(5))-METHYLTRANSFERASE RLMD"/>
    <property type="match status" value="1"/>
</dbReference>
<dbReference type="PANTHER" id="PTHR11061">
    <property type="entry name" value="RNA M5U METHYLTRANSFERASE"/>
    <property type="match status" value="1"/>
</dbReference>
<dbReference type="Pfam" id="PF05958">
    <property type="entry name" value="tRNA_U5-meth_tr"/>
    <property type="match status" value="1"/>
</dbReference>
<dbReference type="SUPFAM" id="SSF50249">
    <property type="entry name" value="Nucleic acid-binding proteins"/>
    <property type="match status" value="1"/>
</dbReference>
<dbReference type="SUPFAM" id="SSF53335">
    <property type="entry name" value="S-adenosyl-L-methionine-dependent methyltransferases"/>
    <property type="match status" value="1"/>
</dbReference>
<dbReference type="PROSITE" id="PS51687">
    <property type="entry name" value="SAM_MT_RNA_M5U"/>
    <property type="match status" value="1"/>
</dbReference>
<dbReference type="PROSITE" id="PS01231">
    <property type="entry name" value="TRMA_2"/>
    <property type="match status" value="1"/>
</dbReference>
<organism>
    <name type="scientific">Polaromonas sp. (strain JS666 / ATCC BAA-500)</name>
    <dbReference type="NCBI Taxonomy" id="296591"/>
    <lineage>
        <taxon>Bacteria</taxon>
        <taxon>Pseudomonadati</taxon>
        <taxon>Pseudomonadota</taxon>
        <taxon>Betaproteobacteria</taxon>
        <taxon>Burkholderiales</taxon>
        <taxon>Comamonadaceae</taxon>
        <taxon>Polaromonas</taxon>
    </lineage>
</organism>
<feature type="chain" id="PRO_0000282050" description="23S rRNA (uracil(1939)-C(5))-methyltransferase RlmD">
    <location>
        <begin position="1"/>
        <end position="486"/>
    </location>
</feature>
<feature type="domain" description="TRAM" evidence="1">
    <location>
        <begin position="10"/>
        <end position="71"/>
    </location>
</feature>
<feature type="active site" description="Nucleophile" evidence="1">
    <location>
        <position position="442"/>
    </location>
</feature>
<feature type="binding site" evidence="1">
    <location>
        <position position="84"/>
    </location>
    <ligand>
        <name>[4Fe-4S] cluster</name>
        <dbReference type="ChEBI" id="CHEBI:49883"/>
    </ligand>
</feature>
<feature type="binding site" evidence="1">
    <location>
        <position position="94"/>
    </location>
    <ligand>
        <name>[4Fe-4S] cluster</name>
        <dbReference type="ChEBI" id="CHEBI:49883"/>
    </ligand>
</feature>
<feature type="binding site" evidence="1">
    <location>
        <position position="97"/>
    </location>
    <ligand>
        <name>[4Fe-4S] cluster</name>
        <dbReference type="ChEBI" id="CHEBI:49883"/>
    </ligand>
</feature>
<feature type="binding site" evidence="1">
    <location>
        <position position="176"/>
    </location>
    <ligand>
        <name>[4Fe-4S] cluster</name>
        <dbReference type="ChEBI" id="CHEBI:49883"/>
    </ligand>
</feature>
<feature type="binding site" evidence="1">
    <location>
        <position position="285"/>
    </location>
    <ligand>
        <name>S-adenosyl-L-methionine</name>
        <dbReference type="ChEBI" id="CHEBI:59789"/>
    </ligand>
</feature>
<feature type="binding site" evidence="1">
    <location>
        <position position="314"/>
    </location>
    <ligand>
        <name>S-adenosyl-L-methionine</name>
        <dbReference type="ChEBI" id="CHEBI:59789"/>
    </ligand>
</feature>
<feature type="binding site" evidence="1">
    <location>
        <position position="319"/>
    </location>
    <ligand>
        <name>S-adenosyl-L-methionine</name>
        <dbReference type="ChEBI" id="CHEBI:59789"/>
    </ligand>
</feature>
<feature type="binding site" evidence="1">
    <location>
        <position position="335"/>
    </location>
    <ligand>
        <name>S-adenosyl-L-methionine</name>
        <dbReference type="ChEBI" id="CHEBI:59789"/>
    </ligand>
</feature>
<feature type="binding site" evidence="1">
    <location>
        <position position="370"/>
    </location>
    <ligand>
        <name>S-adenosyl-L-methionine</name>
        <dbReference type="ChEBI" id="CHEBI:59789"/>
    </ligand>
</feature>
<feature type="binding site" evidence="1">
    <location>
        <position position="391"/>
    </location>
    <ligand>
        <name>S-adenosyl-L-methionine</name>
        <dbReference type="ChEBI" id="CHEBI:59789"/>
    </ligand>
</feature>